<feature type="chain" id="PRO_0000130864" description="Small ribosomal subunit protein eS4">
    <location>
        <begin position="1"/>
        <end position="243"/>
    </location>
</feature>
<feature type="domain" description="S4 RNA-binding">
    <location>
        <begin position="37"/>
        <end position="99"/>
    </location>
</feature>
<protein>
    <recommendedName>
        <fullName evidence="1">Small ribosomal subunit protein eS4</fullName>
    </recommendedName>
    <alternativeName>
        <fullName>30S ribosomal protein S4e</fullName>
    </alternativeName>
</protein>
<proteinExistence type="inferred from homology"/>
<accession>Q975J2</accession>
<accession>F9VMX6</accession>
<dbReference type="EMBL" id="BA000023">
    <property type="protein sequence ID" value="BAK54273.1"/>
    <property type="molecule type" value="Genomic_DNA"/>
</dbReference>
<dbReference type="RefSeq" id="WP_010978391.1">
    <property type="nucleotide sequence ID" value="NC_003106.2"/>
</dbReference>
<dbReference type="SMR" id="Q975J2"/>
<dbReference type="STRING" id="273063.STK_04210"/>
<dbReference type="KEGG" id="sto:STK_04210"/>
<dbReference type="PATRIC" id="fig|273063.9.peg.488"/>
<dbReference type="eggNOG" id="arCOG04093">
    <property type="taxonomic scope" value="Archaea"/>
</dbReference>
<dbReference type="OrthoDB" id="372073at2157"/>
<dbReference type="Proteomes" id="UP000001015">
    <property type="component" value="Chromosome"/>
</dbReference>
<dbReference type="GO" id="GO:0022627">
    <property type="term" value="C:cytosolic small ribosomal subunit"/>
    <property type="evidence" value="ECO:0007669"/>
    <property type="project" value="TreeGrafter"/>
</dbReference>
<dbReference type="GO" id="GO:0019843">
    <property type="term" value="F:rRNA binding"/>
    <property type="evidence" value="ECO:0007669"/>
    <property type="project" value="UniProtKB-KW"/>
</dbReference>
<dbReference type="GO" id="GO:0003735">
    <property type="term" value="F:structural constituent of ribosome"/>
    <property type="evidence" value="ECO:0007669"/>
    <property type="project" value="InterPro"/>
</dbReference>
<dbReference type="GO" id="GO:0006412">
    <property type="term" value="P:translation"/>
    <property type="evidence" value="ECO:0007669"/>
    <property type="project" value="UniProtKB-UniRule"/>
</dbReference>
<dbReference type="CDD" id="cd06087">
    <property type="entry name" value="KOW_RPS4"/>
    <property type="match status" value="1"/>
</dbReference>
<dbReference type="CDD" id="cd00165">
    <property type="entry name" value="S4"/>
    <property type="match status" value="1"/>
</dbReference>
<dbReference type="FunFam" id="3.10.290.10:FF:000002">
    <property type="entry name" value="40S ribosomal protein S4"/>
    <property type="match status" value="1"/>
</dbReference>
<dbReference type="Gene3D" id="2.30.30.30">
    <property type="match status" value="1"/>
</dbReference>
<dbReference type="Gene3D" id="2.40.50.740">
    <property type="match status" value="1"/>
</dbReference>
<dbReference type="Gene3D" id="3.10.290.10">
    <property type="entry name" value="RNA-binding S4 domain"/>
    <property type="match status" value="1"/>
</dbReference>
<dbReference type="HAMAP" id="MF_00485">
    <property type="entry name" value="Ribosomal_eS4"/>
    <property type="match status" value="1"/>
</dbReference>
<dbReference type="InterPro" id="IPR014722">
    <property type="entry name" value="Rib_uL2_dom2"/>
</dbReference>
<dbReference type="InterPro" id="IPR000876">
    <property type="entry name" value="Ribosomal_eS4"/>
</dbReference>
<dbReference type="InterPro" id="IPR013845">
    <property type="entry name" value="Ribosomal_eS4_central_region"/>
</dbReference>
<dbReference type="InterPro" id="IPR038237">
    <property type="entry name" value="Ribosomal_eS4_central_sf"/>
</dbReference>
<dbReference type="InterPro" id="IPR041982">
    <property type="entry name" value="Ribosomal_eS4_KOW"/>
</dbReference>
<dbReference type="InterPro" id="IPR013843">
    <property type="entry name" value="Ribosomal_eS4_N"/>
</dbReference>
<dbReference type="InterPro" id="IPR002942">
    <property type="entry name" value="S4_RNA-bd"/>
</dbReference>
<dbReference type="InterPro" id="IPR036986">
    <property type="entry name" value="S4_RNA-bd_sf"/>
</dbReference>
<dbReference type="NCBIfam" id="NF003312">
    <property type="entry name" value="PRK04313.1"/>
    <property type="match status" value="1"/>
</dbReference>
<dbReference type="PANTHER" id="PTHR11581">
    <property type="entry name" value="30S/40S RIBOSOMAL PROTEIN S4"/>
    <property type="match status" value="1"/>
</dbReference>
<dbReference type="PANTHER" id="PTHR11581:SF0">
    <property type="entry name" value="SMALL RIBOSOMAL SUBUNIT PROTEIN ES4"/>
    <property type="match status" value="1"/>
</dbReference>
<dbReference type="Pfam" id="PF00900">
    <property type="entry name" value="Ribosomal_S4e"/>
    <property type="match status" value="1"/>
</dbReference>
<dbReference type="Pfam" id="PF08071">
    <property type="entry name" value="RS4NT"/>
    <property type="match status" value="1"/>
</dbReference>
<dbReference type="Pfam" id="PF01479">
    <property type="entry name" value="S4"/>
    <property type="match status" value="1"/>
</dbReference>
<dbReference type="PIRSF" id="PIRSF002116">
    <property type="entry name" value="Ribosomal_S4"/>
    <property type="match status" value="1"/>
</dbReference>
<dbReference type="SMART" id="SM00363">
    <property type="entry name" value="S4"/>
    <property type="match status" value="1"/>
</dbReference>
<dbReference type="SUPFAM" id="SSF55174">
    <property type="entry name" value="Alpha-L RNA-binding motif"/>
    <property type="match status" value="1"/>
</dbReference>
<dbReference type="PROSITE" id="PS50889">
    <property type="entry name" value="S4"/>
    <property type="match status" value="1"/>
</dbReference>
<comment type="similarity">
    <text evidence="1">Belongs to the eukaryotic ribosomal protein eS4 family.</text>
</comment>
<gene>
    <name type="primary">rps4e</name>
    <name type="ordered locus">STK_04210</name>
</gene>
<evidence type="ECO:0000305" key="1"/>
<keyword id="KW-1185">Reference proteome</keyword>
<keyword id="KW-0687">Ribonucleoprotein</keyword>
<keyword id="KW-0689">Ribosomal protein</keyword>
<keyword id="KW-0694">RNA-binding</keyword>
<keyword id="KW-0699">rRNA-binding</keyword>
<sequence>MAHITRFEAPWFLNLSKKEYKWTIRANPGPHKLSESIPLALLLKHYLNVAETTREAKRLVVEGKIMVDGRVRKDYKFPVGLMDVISIPSSDLYFRIVPDNIKYLMPVKISKEDAKYKFVRIVNKTTNKNGNIQLNLEDGRNILIPKEKVPEMNYPTLTTLKIEIPSQNIIKSYELSEGKYAIIIGGRNVGLHGVIKTIQYAKYKKRKYSIVTIEQKNGESVQTNLQNVMVIGDSEIDPNVGVR</sequence>
<name>RS4E_SULTO</name>
<organism>
    <name type="scientific">Sulfurisphaera tokodaii (strain DSM 16993 / JCM 10545 / NBRC 100140 / 7)</name>
    <name type="common">Sulfolobus tokodaii</name>
    <dbReference type="NCBI Taxonomy" id="273063"/>
    <lineage>
        <taxon>Archaea</taxon>
        <taxon>Thermoproteota</taxon>
        <taxon>Thermoprotei</taxon>
        <taxon>Sulfolobales</taxon>
        <taxon>Sulfolobaceae</taxon>
        <taxon>Sulfurisphaera</taxon>
    </lineage>
</organism>
<reference key="1">
    <citation type="journal article" date="2001" name="DNA Res.">
        <title>Complete genome sequence of an aerobic thermoacidophilic Crenarchaeon, Sulfolobus tokodaii strain7.</title>
        <authorList>
            <person name="Kawarabayasi Y."/>
            <person name="Hino Y."/>
            <person name="Horikawa H."/>
            <person name="Jin-no K."/>
            <person name="Takahashi M."/>
            <person name="Sekine M."/>
            <person name="Baba S."/>
            <person name="Ankai A."/>
            <person name="Kosugi H."/>
            <person name="Hosoyama A."/>
            <person name="Fukui S."/>
            <person name="Nagai Y."/>
            <person name="Nishijima K."/>
            <person name="Otsuka R."/>
            <person name="Nakazawa H."/>
            <person name="Takamiya M."/>
            <person name="Kato Y."/>
            <person name="Yoshizawa T."/>
            <person name="Tanaka T."/>
            <person name="Kudoh Y."/>
            <person name="Yamazaki J."/>
            <person name="Kushida N."/>
            <person name="Oguchi A."/>
            <person name="Aoki K."/>
            <person name="Masuda S."/>
            <person name="Yanagii M."/>
            <person name="Nishimura M."/>
            <person name="Yamagishi A."/>
            <person name="Oshima T."/>
            <person name="Kikuchi H."/>
        </authorList>
    </citation>
    <scope>NUCLEOTIDE SEQUENCE [LARGE SCALE GENOMIC DNA]</scope>
    <source>
        <strain>DSM 16993 / JCM 10545 / NBRC 100140 / 7</strain>
    </source>
</reference>